<organism>
    <name type="scientific">Acanthamoeba polyphaga mimivirus</name>
    <name type="common">APMV</name>
    <dbReference type="NCBI Taxonomy" id="212035"/>
    <lineage>
        <taxon>Viruses</taxon>
        <taxon>Varidnaviria</taxon>
        <taxon>Bamfordvirae</taxon>
        <taxon>Nucleocytoviricota</taxon>
        <taxon>Megaviricetes</taxon>
        <taxon>Imitervirales</taxon>
        <taxon>Mimiviridae</taxon>
        <taxon>Megamimivirinae</taxon>
        <taxon>Mimivirus</taxon>
        <taxon>Mimivirus bradfordmassiliense</taxon>
    </lineage>
</organism>
<proteinExistence type="predicted"/>
<name>YL609_MIMIV</name>
<dbReference type="EMBL" id="AY653733">
    <property type="protein sequence ID" value="AAV50872.1"/>
    <property type="molecule type" value="Genomic_DNA"/>
</dbReference>
<dbReference type="KEGG" id="vg:9925247"/>
<dbReference type="OrthoDB" id="25923at10239"/>
<dbReference type="Proteomes" id="UP000001134">
    <property type="component" value="Genome"/>
</dbReference>
<feature type="chain" id="PRO_0000253286" description="Uncharacterized protein L609">
    <location>
        <begin position="1"/>
        <end position="314"/>
    </location>
</feature>
<feature type="region of interest" description="Disordered" evidence="1">
    <location>
        <begin position="39"/>
        <end position="146"/>
    </location>
</feature>
<feature type="compositionally biased region" description="Polar residues" evidence="1">
    <location>
        <begin position="56"/>
        <end position="76"/>
    </location>
</feature>
<feature type="compositionally biased region" description="Low complexity" evidence="1">
    <location>
        <begin position="88"/>
        <end position="131"/>
    </location>
</feature>
<feature type="compositionally biased region" description="Acidic residues" evidence="1">
    <location>
        <begin position="132"/>
        <end position="141"/>
    </location>
</feature>
<organismHost>
    <name type="scientific">Acanthamoeba polyphaga</name>
    <name type="common">Amoeba</name>
    <dbReference type="NCBI Taxonomy" id="5757"/>
</organismHost>
<evidence type="ECO:0000256" key="1">
    <source>
        <dbReference type="SAM" id="MobiDB-lite"/>
    </source>
</evidence>
<sequence length="314" mass="36903">MSIDLEKNHNRIYSMNINSMNRDPEFYLKKAKYFYSKSQENVDSDSTDSDNEKNNSTKNVSRNIPKNIPKSISKNIPKNVPRNIPKSIPKNVSKNIPKNVPKNVSKNIPKNIPKNVPNKSRNKYSNYSEDSNYSEDSDYSSDESNSINTVYSDEVDSESIYSDYSDDNDQNNVQNNVQNNVENEDDYDYEYVKMEPVDLAQLIEEHTDLRSKIKPKYTRFYDPVTRHYYSIDKLFEHEDVLLNKRPTTGVWYPEIQNQNNIMKDPKTGQLFRVKKIYNPKGKYHYEINSVKRQTKRKPGTTYYTVTYEDLDPLD</sequence>
<protein>
    <recommendedName>
        <fullName>Uncharacterized protein L609</fullName>
    </recommendedName>
</protein>
<accession>Q5UP67</accession>
<keyword id="KW-1185">Reference proteome</keyword>
<reference key="1">
    <citation type="journal article" date="2004" name="Science">
        <title>The 1.2-megabase genome sequence of Mimivirus.</title>
        <authorList>
            <person name="Raoult D."/>
            <person name="Audic S."/>
            <person name="Robert C."/>
            <person name="Abergel C."/>
            <person name="Renesto P."/>
            <person name="Ogata H."/>
            <person name="La Scola B."/>
            <person name="Susan M."/>
            <person name="Claverie J.-M."/>
        </authorList>
    </citation>
    <scope>NUCLEOTIDE SEQUENCE [LARGE SCALE GENOMIC DNA]</scope>
    <source>
        <strain>Rowbotham-Bradford</strain>
    </source>
</reference>
<gene>
    <name type="ordered locus">MIMI_L609</name>
</gene>